<reference key="1">
    <citation type="journal article" date="2002" name="Proc. Natl. Acad. Sci. U.S.A.">
        <title>Genome sequence of Streptococcus mutans UA159, a cariogenic dental pathogen.</title>
        <authorList>
            <person name="Ajdic D.J."/>
            <person name="McShan W.M."/>
            <person name="McLaughlin R.E."/>
            <person name="Savic G."/>
            <person name="Chang J."/>
            <person name="Carson M.B."/>
            <person name="Primeaux C."/>
            <person name="Tian R."/>
            <person name="Kenton S."/>
            <person name="Jia H.G."/>
            <person name="Lin S.P."/>
            <person name="Qian Y."/>
            <person name="Li S."/>
            <person name="Zhu H."/>
            <person name="Najar F.Z."/>
            <person name="Lai H."/>
            <person name="White J."/>
            <person name="Roe B.A."/>
            <person name="Ferretti J.J."/>
        </authorList>
    </citation>
    <scope>NUCLEOTIDE SEQUENCE [LARGE SCALE GENOMIC DNA]</scope>
    <source>
        <strain>ATCC 700610 / UA159</strain>
    </source>
</reference>
<sequence>MTKEFLPTILKQKQEELASLIMEEVKPLRLTYRLFDFLKEHHDQLQIVAEVKKASPSMGDINLDVDIVKQAQMYEAAGAAMISVLTDQVFFKGNIDFLAEISGSVSIPTLAKDFIIDEKQIVRSRNAGATVILLIVAALPEKRLKELYDFAAGLGLEVLVETHNLSELEIAHRIGAQIIGVNNRNLVTFEVDINTSLELSTHFRDDKVYISESGIFTGQDSKLVAPYFNAILVGTALMQADNVADKVKELAIDKG</sequence>
<keyword id="KW-0028">Amino-acid biosynthesis</keyword>
<keyword id="KW-0057">Aromatic amino acid biosynthesis</keyword>
<keyword id="KW-0210">Decarboxylase</keyword>
<keyword id="KW-0456">Lyase</keyword>
<keyword id="KW-1185">Reference proteome</keyword>
<keyword id="KW-0822">Tryptophan biosynthesis</keyword>
<proteinExistence type="inferred from homology"/>
<accession>Q8DVF5</accession>
<gene>
    <name evidence="1" type="primary">trpC</name>
    <name type="ordered locus">SMU_535</name>
</gene>
<feature type="chain" id="PRO_0000154261" description="Indole-3-glycerol phosphate synthase">
    <location>
        <begin position="1"/>
        <end position="255"/>
    </location>
</feature>
<name>TRPC_STRMU</name>
<protein>
    <recommendedName>
        <fullName evidence="1">Indole-3-glycerol phosphate synthase</fullName>
        <shortName evidence="1">IGPS</shortName>
        <ecNumber evidence="1">4.1.1.48</ecNumber>
    </recommendedName>
</protein>
<organism>
    <name type="scientific">Streptococcus mutans serotype c (strain ATCC 700610 / UA159)</name>
    <dbReference type="NCBI Taxonomy" id="210007"/>
    <lineage>
        <taxon>Bacteria</taxon>
        <taxon>Bacillati</taxon>
        <taxon>Bacillota</taxon>
        <taxon>Bacilli</taxon>
        <taxon>Lactobacillales</taxon>
        <taxon>Streptococcaceae</taxon>
        <taxon>Streptococcus</taxon>
    </lineage>
</organism>
<evidence type="ECO:0000255" key="1">
    <source>
        <dbReference type="HAMAP-Rule" id="MF_00134"/>
    </source>
</evidence>
<comment type="catalytic activity">
    <reaction evidence="1">
        <text>1-(2-carboxyphenylamino)-1-deoxy-D-ribulose 5-phosphate + H(+) = (1S,2R)-1-C-(indol-3-yl)glycerol 3-phosphate + CO2 + H2O</text>
        <dbReference type="Rhea" id="RHEA:23476"/>
        <dbReference type="ChEBI" id="CHEBI:15377"/>
        <dbReference type="ChEBI" id="CHEBI:15378"/>
        <dbReference type="ChEBI" id="CHEBI:16526"/>
        <dbReference type="ChEBI" id="CHEBI:58613"/>
        <dbReference type="ChEBI" id="CHEBI:58866"/>
        <dbReference type="EC" id="4.1.1.48"/>
    </reaction>
</comment>
<comment type="pathway">
    <text evidence="1">Amino-acid biosynthesis; L-tryptophan biosynthesis; L-tryptophan from chorismate: step 4/5.</text>
</comment>
<comment type="similarity">
    <text evidence="1">Belongs to the TrpC family.</text>
</comment>
<dbReference type="EC" id="4.1.1.48" evidence="1"/>
<dbReference type="EMBL" id="AE014133">
    <property type="protein sequence ID" value="AAN58278.1"/>
    <property type="molecule type" value="Genomic_DNA"/>
</dbReference>
<dbReference type="RefSeq" id="NP_720972.1">
    <property type="nucleotide sequence ID" value="NC_004350.2"/>
</dbReference>
<dbReference type="RefSeq" id="WP_002262054.1">
    <property type="nucleotide sequence ID" value="NC_004350.2"/>
</dbReference>
<dbReference type="SMR" id="Q8DVF5"/>
<dbReference type="STRING" id="210007.SMU_535"/>
<dbReference type="KEGG" id="smu:SMU_535"/>
<dbReference type="PATRIC" id="fig|210007.7.peg.472"/>
<dbReference type="eggNOG" id="COG0134">
    <property type="taxonomic scope" value="Bacteria"/>
</dbReference>
<dbReference type="HOGENOM" id="CLU_034247_2_1_9"/>
<dbReference type="OrthoDB" id="9804217at2"/>
<dbReference type="PhylomeDB" id="Q8DVF5"/>
<dbReference type="UniPathway" id="UPA00035">
    <property type="reaction ID" value="UER00043"/>
</dbReference>
<dbReference type="Proteomes" id="UP000002512">
    <property type="component" value="Chromosome"/>
</dbReference>
<dbReference type="GO" id="GO:0004425">
    <property type="term" value="F:indole-3-glycerol-phosphate synthase activity"/>
    <property type="evidence" value="ECO:0007669"/>
    <property type="project" value="UniProtKB-UniRule"/>
</dbReference>
<dbReference type="GO" id="GO:0004640">
    <property type="term" value="F:phosphoribosylanthranilate isomerase activity"/>
    <property type="evidence" value="ECO:0007669"/>
    <property type="project" value="TreeGrafter"/>
</dbReference>
<dbReference type="GO" id="GO:0000162">
    <property type="term" value="P:L-tryptophan biosynthetic process"/>
    <property type="evidence" value="ECO:0007669"/>
    <property type="project" value="UniProtKB-UniRule"/>
</dbReference>
<dbReference type="CDD" id="cd00331">
    <property type="entry name" value="IGPS"/>
    <property type="match status" value="1"/>
</dbReference>
<dbReference type="FunFam" id="3.20.20.70:FF:000024">
    <property type="entry name" value="Indole-3-glycerol phosphate synthase"/>
    <property type="match status" value="1"/>
</dbReference>
<dbReference type="Gene3D" id="3.20.20.70">
    <property type="entry name" value="Aldolase class I"/>
    <property type="match status" value="1"/>
</dbReference>
<dbReference type="HAMAP" id="MF_00134_B">
    <property type="entry name" value="IGPS_B"/>
    <property type="match status" value="1"/>
</dbReference>
<dbReference type="InterPro" id="IPR013785">
    <property type="entry name" value="Aldolase_TIM"/>
</dbReference>
<dbReference type="InterPro" id="IPR045186">
    <property type="entry name" value="Indole-3-glycerol_P_synth"/>
</dbReference>
<dbReference type="InterPro" id="IPR013798">
    <property type="entry name" value="Indole-3-glycerol_P_synth_dom"/>
</dbReference>
<dbReference type="InterPro" id="IPR001468">
    <property type="entry name" value="Indole-3-GlycerolPSynthase_CS"/>
</dbReference>
<dbReference type="InterPro" id="IPR011060">
    <property type="entry name" value="RibuloseP-bd_barrel"/>
</dbReference>
<dbReference type="NCBIfam" id="NF001371">
    <property type="entry name" value="PRK00278.1-3"/>
    <property type="match status" value="1"/>
</dbReference>
<dbReference type="NCBIfam" id="NF001377">
    <property type="entry name" value="PRK00278.2-4"/>
    <property type="match status" value="1"/>
</dbReference>
<dbReference type="PANTHER" id="PTHR22854:SF2">
    <property type="entry name" value="INDOLE-3-GLYCEROL-PHOSPHATE SYNTHASE"/>
    <property type="match status" value="1"/>
</dbReference>
<dbReference type="PANTHER" id="PTHR22854">
    <property type="entry name" value="TRYPTOPHAN BIOSYNTHESIS PROTEIN"/>
    <property type="match status" value="1"/>
</dbReference>
<dbReference type="Pfam" id="PF00218">
    <property type="entry name" value="IGPS"/>
    <property type="match status" value="1"/>
</dbReference>
<dbReference type="SUPFAM" id="SSF51366">
    <property type="entry name" value="Ribulose-phoshate binding barrel"/>
    <property type="match status" value="1"/>
</dbReference>
<dbReference type="PROSITE" id="PS00614">
    <property type="entry name" value="IGPS"/>
    <property type="match status" value="1"/>
</dbReference>